<protein>
    <recommendedName>
        <fullName>Dopamine beta-hydroxylase</fullName>
        <ecNumber evidence="7 11">1.14.17.1</ecNumber>
    </recommendedName>
    <alternativeName>
        <fullName>Dopamine beta-monooxygenase</fullName>
    </alternativeName>
    <component>
        <recommendedName>
            <fullName>Soluble dopamine beta-hydroxylase</fullName>
        </recommendedName>
    </component>
</protein>
<sequence length="622" mass="70314">MQAHLSHQPCWSSLPSPSVREAASMYGTAVAIFLVILVAALRGSEPPESPFPYHIPLDPEGILELSWNVSYVQEIIHFQLQVQGLRAGVLFGMSDRGEMENADLIMLWTDGDRAYFADAWSDRKGQIHLDSQQDYQLLQAQRTRDGLSLLFKRPFVTCDPKDYVIEDDTVHLVYGILEEPFQSLEAINTSGLHTGLQRVQLLKSEVPTPSMPEDVQTMDIRAPDILIPDNETTYWCYITELPPRFPRHHIIMYEAIVTEGNEALVHHMEVFQCAAESEDFPQFNGPCDSKMKPDRLNYCRHVLAAWALGAKAFYYPKEAGVPFGGPGSSPFLRLEVHYHNPRKIQGRQDSSGIRLHYTATLRRYDAGIMELGLVYTPLMAIPPQETAFVLTGYCTDKCTQMALQDSGIHIFASQLHTHLTGRKVVTVLARDGQERKVVNRDNHYSPHFQEIRMLKKVVTVYPGDVLITSCTYNTENKTLATVGGFGILEEMCVNYVHYYPQTELELCKSAVDDGFLQKYFHMVNRFSSEEVCTCPQASVPQQFSSVPWNSFNRDMLKALYDYAPISMHCNKTSAVRFPGEWNLQPLPKITSTLEEPTPRCPIRQTQSPANPTVPITTEADAE</sequence>
<name>DOPO_MOUSE</name>
<feature type="chain" id="PRO_0000006357" description="Dopamine beta-hydroxylase">
    <location>
        <begin position="1"/>
        <end position="622"/>
    </location>
</feature>
<feature type="chain" id="PRO_0000308210" description="Soluble dopamine beta-hydroxylase" evidence="3">
    <location>
        <begin position="44"/>
        <end position="622"/>
    </location>
</feature>
<feature type="topological domain" description="Cytoplasmic" evidence="3">
    <location>
        <begin position="1"/>
        <end position="20"/>
    </location>
</feature>
<feature type="transmembrane region" description="Helical; Signal-anchor for type II membrane protein" evidence="3">
    <location>
        <begin position="21"/>
        <end position="41"/>
    </location>
</feature>
<feature type="topological domain" description="Intragranular" evidence="3">
    <location>
        <begin position="42"/>
        <end position="621"/>
    </location>
</feature>
<feature type="domain" description="DOMON" evidence="4">
    <location>
        <begin position="61"/>
        <end position="177"/>
    </location>
</feature>
<feature type="region of interest" description="Disordered" evidence="5">
    <location>
        <begin position="594"/>
        <end position="622"/>
    </location>
</feature>
<feature type="compositionally biased region" description="Polar residues" evidence="5">
    <location>
        <begin position="603"/>
        <end position="615"/>
    </location>
</feature>
<feature type="active site" evidence="3">
    <location>
        <position position="234"/>
    </location>
</feature>
<feature type="active site" evidence="3">
    <location>
        <position position="416"/>
    </location>
</feature>
<feature type="binding site" evidence="1">
    <location>
        <position position="266"/>
    </location>
    <ligand>
        <name>Cu(2+)</name>
        <dbReference type="ChEBI" id="CHEBI:29036"/>
        <label>A</label>
    </ligand>
</feature>
<feature type="binding site" evidence="1">
    <location>
        <position position="267"/>
    </location>
    <ligand>
        <name>Cu(2+)</name>
        <dbReference type="ChEBI" id="CHEBI:29036"/>
        <label>A</label>
    </ligand>
</feature>
<feature type="binding site" evidence="1">
    <location>
        <position position="337"/>
    </location>
    <ligand>
        <name>Cu(2+)</name>
        <dbReference type="ChEBI" id="CHEBI:29036"/>
        <label>A</label>
    </ligand>
</feature>
<feature type="binding site" evidence="1">
    <location>
        <position position="416"/>
    </location>
    <ligand>
        <name>Cu(2+)</name>
        <dbReference type="ChEBI" id="CHEBI:29036"/>
        <label>B</label>
    </ligand>
</feature>
<feature type="binding site" evidence="1">
    <location>
        <position position="418"/>
    </location>
    <ligand>
        <name>Cu(2+)</name>
        <dbReference type="ChEBI" id="CHEBI:29036"/>
        <label>B</label>
    </ligand>
</feature>
<feature type="binding site" evidence="1">
    <location>
        <position position="491"/>
    </location>
    <ligand>
        <name>Cu(2+)</name>
        <dbReference type="ChEBI" id="CHEBI:29036"/>
        <label>B</label>
    </ligand>
</feature>
<feature type="site" description="Cleavage" evidence="2">
    <location>
        <begin position="43"/>
        <end position="44"/>
    </location>
</feature>
<feature type="modified residue" description="Phosphoserine; by CaMK" evidence="3">
    <location>
        <position position="350"/>
    </location>
</feature>
<feature type="glycosylation site" description="N-linked (GlcNAc...) asparagine" evidence="3">
    <location>
        <position position="68"/>
    </location>
</feature>
<feature type="glycosylation site" description="N-linked (GlcNAc...) asparagine" evidence="3">
    <location>
        <position position="188"/>
    </location>
</feature>
<feature type="glycosylation site" description="N-linked (GlcNAc...) asparagine" evidence="3">
    <location>
        <position position="476"/>
    </location>
</feature>
<feature type="glycosylation site" description="N-linked (GlcNAc...) asparagine" evidence="3">
    <location>
        <position position="570"/>
    </location>
</feature>
<feature type="disulfide bond" evidence="1">
    <location>
        <begin position="158"/>
        <end position="600"/>
    </location>
</feature>
<feature type="disulfide bond" evidence="1">
    <location>
        <begin position="236"/>
        <end position="287"/>
    </location>
</feature>
<feature type="disulfide bond" evidence="1">
    <location>
        <begin position="273"/>
        <end position="299"/>
    </location>
</feature>
<feature type="disulfide bond" evidence="1">
    <location>
        <begin position="394"/>
        <end position="507"/>
    </location>
</feature>
<feature type="disulfide bond" evidence="1">
    <location>
        <begin position="398"/>
        <end position="569"/>
    </location>
</feature>
<feature type="disulfide bond" evidence="1">
    <location>
        <begin position="470"/>
        <end position="492"/>
    </location>
</feature>
<feature type="disulfide bond" description="Interchain" evidence="1">
    <location>
        <position position="532"/>
    </location>
</feature>
<feature type="disulfide bond" description="Interchain" evidence="1">
    <location>
        <position position="534"/>
    </location>
</feature>
<feature type="sequence conflict" description="In Ref. 1; AAB24330." evidence="10" ref="1">
    <original>T</original>
    <variation>S</variation>
    <location>
        <position position="109"/>
    </location>
</feature>
<feature type="sequence conflict" description="In Ref. 1; AAB24330." evidence="10" ref="1">
    <original>Q</original>
    <variation>L</variation>
    <location>
        <position position="197"/>
    </location>
</feature>
<feature type="sequence conflict" description="In Ref. 1; AAB24330." evidence="10" ref="1">
    <original>T</original>
    <variation>Q</variation>
    <location>
        <position position="232"/>
    </location>
</feature>
<feature type="sequence conflict" description="In Ref. 1; AAB24330." evidence="10" ref="1">
    <original>H</original>
    <variation>P</variation>
    <location>
        <position position="356"/>
    </location>
</feature>
<feature type="sequence conflict" description="In Ref. 1; AAB24330." evidence="10" ref="1">
    <original>V</original>
    <variation>E</variation>
    <location>
        <position position="437"/>
    </location>
</feature>
<feature type="sequence conflict" description="In Ref. 1; AAB24330." evidence="10" ref="1">
    <original>Q</original>
    <variation>R</variation>
    <location>
        <position position="449"/>
    </location>
</feature>
<feature type="sequence conflict" description="In Ref. 1; AAB24330." evidence="10" ref="1">
    <original>D</original>
    <variation>N</variation>
    <location>
        <position position="554"/>
    </location>
</feature>
<feature type="sequence conflict" description="In Ref. 1; AAB24330." evidence="10" ref="1">
    <original>EADA</original>
    <variation>GGRC</variation>
    <location>
        <begin position="618"/>
        <end position="621"/>
    </location>
</feature>
<comment type="function">
    <text evidence="7 8">Catalyzes the hydroxylation of dopamine to noradrenaline (also known as norepinephrine), and is thus vital for regulation of these neurotransmitters.</text>
</comment>
<comment type="catalytic activity">
    <reaction evidence="7 11">
        <text>dopamine + 2 L-ascorbate + O2 = (R)-noradrenaline + 2 monodehydro-L-ascorbate radical + H2O</text>
        <dbReference type="Rhea" id="RHEA:19117"/>
        <dbReference type="ChEBI" id="CHEBI:15377"/>
        <dbReference type="ChEBI" id="CHEBI:15379"/>
        <dbReference type="ChEBI" id="CHEBI:38290"/>
        <dbReference type="ChEBI" id="CHEBI:59513"/>
        <dbReference type="ChEBI" id="CHEBI:59905"/>
        <dbReference type="ChEBI" id="CHEBI:72587"/>
        <dbReference type="EC" id="1.14.17.1"/>
    </reaction>
    <physiologicalReaction direction="left-to-right" evidence="7">
        <dbReference type="Rhea" id="RHEA:19118"/>
    </physiologicalReaction>
</comment>
<comment type="cofactor">
    <cofactor evidence="1">
        <name>Cu(2+)</name>
        <dbReference type="ChEBI" id="CHEBI:29036"/>
    </cofactor>
    <text evidence="1">Binds 2 copper ions per subunit.</text>
</comment>
<comment type="pathway">
    <text evidence="7 8">Catecholamine biosynthesis; (R)-noradrenaline biosynthesis; (R)-noradrenaline from dopamine: step 1/1.</text>
</comment>
<comment type="subunit">
    <text evidence="1">Homotetramer; composed of two disulfide-linked dimers.</text>
</comment>
<comment type="subcellular location">
    <molecule>Soluble dopamine beta-hydroxylase</molecule>
    <subcellularLocation>
        <location evidence="9">Cytoplasmic vesicle</location>
        <location evidence="9">Secretory vesicle lumen</location>
    </subcellularLocation>
    <subcellularLocation>
        <location evidence="9">Cytoplasmic vesicle</location>
        <location evidence="9">Secretory vesicle</location>
        <location evidence="9">Chromaffin granule lumen</location>
    </subcellularLocation>
</comment>
<comment type="subcellular location">
    <subcellularLocation>
        <location evidence="9">Cytoplasmic vesicle</location>
        <location evidence="9">Secretory vesicle membrane</location>
        <topology evidence="10">Single-pass type II membrane protein</topology>
    </subcellularLocation>
    <subcellularLocation>
        <location evidence="9">Cytoplasmic vesicle</location>
        <location evidence="9">Secretory vesicle</location>
        <location evidence="9">Chromaffin granule membrane</location>
        <topology evidence="10">Single-pass type II membrane protein</topology>
    </subcellularLocation>
</comment>
<comment type="tissue specificity">
    <text evidence="6 9">Detected in adrenal gland secretory granules (at protein level) (PubMed:7961964). Detected in adrenal gland (PubMed:1280432).</text>
</comment>
<comment type="PTM">
    <text evidence="2">Proteolytic cleavage after the membrane-anchor leads to the release of the soluble form.</text>
</comment>
<comment type="PTM">
    <text evidence="1">N-glycosylated.</text>
</comment>
<comment type="disruption phenotype">
    <text evidence="7 8">Complete embryonic lethality in homozygous dams, and 88% embryonic lethality for homozygous embryos in heterozygous dams. Only 12% of the homozygous pups from heterozygous dams are alive at birth. Mutant pups have no obvious phenotype at birth, but nearly half of them die within 48 h, and only 5% survive to adulthood. Three weeks after birth, mutant pups are runted and weigh only half as much as their littermates. Still, the weight of adult males reaches 80% and that of females 88% of that of their littermates. Besides, mutant mice display ptosis. Embryonic lethality is due to a lack of noradrenaline and can be prevented by treatment with dihydroxyphenylserine, a compound that can be converted into noradrenaline in the absence of Dbh.</text>
</comment>
<comment type="similarity">
    <text evidence="10">Belongs to the copper type II ascorbate-dependent monooxygenase family.</text>
</comment>
<proteinExistence type="evidence at protein level"/>
<accession>Q64237</accession>
<accession>Q3V1U4</accession>
<gene>
    <name type="primary">Dbh</name>
</gene>
<evidence type="ECO:0000250" key="1">
    <source>
        <dbReference type="UniProtKB" id="P09172"/>
    </source>
</evidence>
<evidence type="ECO:0000250" key="2">
    <source>
        <dbReference type="UniProtKB" id="P15101"/>
    </source>
</evidence>
<evidence type="ECO:0000255" key="3"/>
<evidence type="ECO:0000255" key="4">
    <source>
        <dbReference type="PROSITE-ProRule" id="PRU00246"/>
    </source>
</evidence>
<evidence type="ECO:0000256" key="5">
    <source>
        <dbReference type="SAM" id="MobiDB-lite"/>
    </source>
</evidence>
<evidence type="ECO:0000269" key="6">
    <source>
    </source>
</evidence>
<evidence type="ECO:0000269" key="7">
    <source>
    </source>
</evidence>
<evidence type="ECO:0000269" key="8">
    <source>
    </source>
</evidence>
<evidence type="ECO:0000269" key="9">
    <source>
    </source>
</evidence>
<evidence type="ECO:0000305" key="10"/>
<evidence type="ECO:0000305" key="11">
    <source>
    </source>
</evidence>
<dbReference type="EC" id="1.14.17.1" evidence="7 11"/>
<dbReference type="EMBL" id="S50200">
    <property type="protein sequence ID" value="AAB24330.1"/>
    <property type="molecule type" value="mRNA"/>
</dbReference>
<dbReference type="EMBL" id="AK132245">
    <property type="protein sequence ID" value="BAE21055.1"/>
    <property type="molecule type" value="mRNA"/>
</dbReference>
<dbReference type="EMBL" id="AL954801">
    <property type="status" value="NOT_ANNOTATED_CDS"/>
    <property type="molecule type" value="Genomic_DNA"/>
</dbReference>
<dbReference type="EMBL" id="CH466542">
    <property type="protein sequence ID" value="EDL08360.1"/>
    <property type="molecule type" value="Genomic_DNA"/>
</dbReference>
<dbReference type="EMBL" id="BC141022">
    <property type="protein sequence ID" value="AAI41023.1"/>
    <property type="molecule type" value="mRNA"/>
</dbReference>
<dbReference type="EMBL" id="BC171949">
    <property type="protein sequence ID" value="AAI71949.1"/>
    <property type="molecule type" value="mRNA"/>
</dbReference>
<dbReference type="CCDS" id="CCDS38088.1"/>
<dbReference type="PIR" id="JC1346">
    <property type="entry name" value="JC1346"/>
</dbReference>
<dbReference type="RefSeq" id="NP_620392.2">
    <property type="nucleotide sequence ID" value="NM_138942.3"/>
</dbReference>
<dbReference type="PDB" id="6G9Q">
    <property type="method" value="X-ray"/>
    <property type="resolution" value="1.89 A"/>
    <property type="chains" value="P=557-565"/>
</dbReference>
<dbReference type="PDB" id="6G9R">
    <property type="method" value="X-ray"/>
    <property type="resolution" value="2.70 A"/>
    <property type="chains" value="I/J/K/P=557-565"/>
</dbReference>
<dbReference type="PDBsum" id="6G9Q"/>
<dbReference type="PDBsum" id="6G9R"/>
<dbReference type="SMR" id="Q64237"/>
<dbReference type="FunCoup" id="Q64237">
    <property type="interactions" value="118"/>
</dbReference>
<dbReference type="STRING" id="10090.ENSMUSP00000000910"/>
<dbReference type="GlyConnect" id="2266">
    <property type="glycosylation" value="1 N-Linked glycan (1 site)"/>
</dbReference>
<dbReference type="GlyCosmos" id="Q64237">
    <property type="glycosylation" value="4 sites, 1 glycan"/>
</dbReference>
<dbReference type="GlyGen" id="Q64237">
    <property type="glycosylation" value="5 sites, 3 N-linked glycans (2 sites)"/>
</dbReference>
<dbReference type="iPTMnet" id="Q64237"/>
<dbReference type="PhosphoSitePlus" id="Q64237"/>
<dbReference type="SwissPalm" id="Q64237"/>
<dbReference type="CPTAC" id="non-CPTAC-3459"/>
<dbReference type="PaxDb" id="10090-ENSMUSP00000000910"/>
<dbReference type="ProteomicsDB" id="277397"/>
<dbReference type="Antibodypedia" id="881">
    <property type="antibodies" value="547 antibodies from 46 providers"/>
</dbReference>
<dbReference type="DNASU" id="13166"/>
<dbReference type="Ensembl" id="ENSMUST00000000910.7">
    <property type="protein sequence ID" value="ENSMUSP00000000910.7"/>
    <property type="gene ID" value="ENSMUSG00000000889.9"/>
</dbReference>
<dbReference type="GeneID" id="13166"/>
<dbReference type="KEGG" id="mmu:13166"/>
<dbReference type="UCSC" id="uc008ixe.1">
    <property type="organism name" value="mouse"/>
</dbReference>
<dbReference type="AGR" id="MGI:94864"/>
<dbReference type="CTD" id="1621"/>
<dbReference type="MGI" id="MGI:94864">
    <property type="gene designation" value="Dbh"/>
</dbReference>
<dbReference type="VEuPathDB" id="HostDB:ENSMUSG00000000889"/>
<dbReference type="eggNOG" id="KOG3568">
    <property type="taxonomic scope" value="Eukaryota"/>
</dbReference>
<dbReference type="GeneTree" id="ENSGT00530000063085"/>
<dbReference type="HOGENOM" id="CLU_017939_3_0_1"/>
<dbReference type="InParanoid" id="Q64237"/>
<dbReference type="OMA" id="FPHFSGP"/>
<dbReference type="OrthoDB" id="129121at2759"/>
<dbReference type="PhylomeDB" id="Q64237"/>
<dbReference type="TreeFam" id="TF320698"/>
<dbReference type="BRENDA" id="1.14.17.1">
    <property type="organism ID" value="3474"/>
</dbReference>
<dbReference type="Reactome" id="R-MMU-209905">
    <property type="pathway name" value="Catecholamine biosynthesis"/>
</dbReference>
<dbReference type="UniPathway" id="UPA00748">
    <property type="reaction ID" value="UER00735"/>
</dbReference>
<dbReference type="BioGRID-ORCS" id="13166">
    <property type="hits" value="4 hits in 79 CRISPR screens"/>
</dbReference>
<dbReference type="ChiTaRS" id="Dbh">
    <property type="organism name" value="mouse"/>
</dbReference>
<dbReference type="PRO" id="PR:Q64237"/>
<dbReference type="Proteomes" id="UP000000589">
    <property type="component" value="Chromosome 2"/>
</dbReference>
<dbReference type="RNAct" id="Q64237">
    <property type="molecule type" value="protein"/>
</dbReference>
<dbReference type="Bgee" id="ENSMUSG00000000889">
    <property type="expression patterns" value="Expressed in superior cervical ganglion and 69 other cell types or tissues"/>
</dbReference>
<dbReference type="GO" id="GO:0034451">
    <property type="term" value="C:centriolar satellite"/>
    <property type="evidence" value="ECO:0007669"/>
    <property type="project" value="Ensembl"/>
</dbReference>
<dbReference type="GO" id="GO:0034466">
    <property type="term" value="C:chromaffin granule lumen"/>
    <property type="evidence" value="ECO:0007669"/>
    <property type="project" value="UniProtKB-SubCell"/>
</dbReference>
<dbReference type="GO" id="GO:0042584">
    <property type="term" value="C:chromaffin granule membrane"/>
    <property type="evidence" value="ECO:0007669"/>
    <property type="project" value="UniProtKB-SubCell"/>
</dbReference>
<dbReference type="GO" id="GO:0005783">
    <property type="term" value="C:endoplasmic reticulum"/>
    <property type="evidence" value="ECO:0007669"/>
    <property type="project" value="Ensembl"/>
</dbReference>
<dbReference type="GO" id="GO:0005615">
    <property type="term" value="C:extracellular space"/>
    <property type="evidence" value="ECO:0000250"/>
    <property type="project" value="UniProtKB"/>
</dbReference>
<dbReference type="GO" id="GO:0034774">
    <property type="term" value="C:secretory granule lumen"/>
    <property type="evidence" value="ECO:0000314"/>
    <property type="project" value="UniProtKB"/>
</dbReference>
<dbReference type="GO" id="GO:0030667">
    <property type="term" value="C:secretory granule membrane"/>
    <property type="evidence" value="ECO:0000314"/>
    <property type="project" value="UniProtKB"/>
</dbReference>
<dbReference type="GO" id="GO:0030658">
    <property type="term" value="C:transport vesicle membrane"/>
    <property type="evidence" value="ECO:0007669"/>
    <property type="project" value="UniProtKB-SubCell"/>
</dbReference>
<dbReference type="GO" id="GO:0005507">
    <property type="term" value="F:copper ion binding"/>
    <property type="evidence" value="ECO:0000250"/>
    <property type="project" value="UniProtKB"/>
</dbReference>
<dbReference type="GO" id="GO:0004500">
    <property type="term" value="F:dopamine beta-monooxygenase activity"/>
    <property type="evidence" value="ECO:0000250"/>
    <property type="project" value="UniProtKB"/>
</dbReference>
<dbReference type="GO" id="GO:0031418">
    <property type="term" value="F:L-ascorbic acid binding"/>
    <property type="evidence" value="ECO:0007669"/>
    <property type="project" value="UniProtKB-KW"/>
</dbReference>
<dbReference type="GO" id="GO:0008306">
    <property type="term" value="P:associative learning"/>
    <property type="evidence" value="ECO:0000315"/>
    <property type="project" value="MGI"/>
</dbReference>
<dbReference type="GO" id="GO:0048149">
    <property type="term" value="P:behavioral response to ethanol"/>
    <property type="evidence" value="ECO:0000315"/>
    <property type="project" value="MGI"/>
</dbReference>
<dbReference type="GO" id="GO:0001974">
    <property type="term" value="P:blood vessel remodeling"/>
    <property type="evidence" value="ECO:0000315"/>
    <property type="project" value="MGI"/>
</dbReference>
<dbReference type="GO" id="GO:0042420">
    <property type="term" value="P:dopamine catabolic process"/>
    <property type="evidence" value="ECO:0000315"/>
    <property type="project" value="UniProtKB"/>
</dbReference>
<dbReference type="GO" id="GO:0042596">
    <property type="term" value="P:fear response"/>
    <property type="evidence" value="ECO:0000315"/>
    <property type="project" value="MGI"/>
</dbReference>
<dbReference type="GO" id="GO:0042593">
    <property type="term" value="P:glucose homeostasis"/>
    <property type="evidence" value="ECO:0000315"/>
    <property type="project" value="MGI"/>
</dbReference>
<dbReference type="GO" id="GO:0042309">
    <property type="term" value="P:homoiothermy"/>
    <property type="evidence" value="ECO:0000315"/>
    <property type="project" value="MGI"/>
</dbReference>
<dbReference type="GO" id="GO:0002443">
    <property type="term" value="P:leukocyte mediated immunity"/>
    <property type="evidence" value="ECO:0000315"/>
    <property type="project" value="MGI"/>
</dbReference>
<dbReference type="GO" id="GO:0050900">
    <property type="term" value="P:leukocyte migration"/>
    <property type="evidence" value="ECO:0000315"/>
    <property type="project" value="MGI"/>
</dbReference>
<dbReference type="GO" id="GO:0007626">
    <property type="term" value="P:locomotory behavior"/>
    <property type="evidence" value="ECO:0000315"/>
    <property type="project" value="UniProtKB"/>
</dbReference>
<dbReference type="GO" id="GO:0042711">
    <property type="term" value="P:maternal behavior"/>
    <property type="evidence" value="ECO:0000315"/>
    <property type="project" value="MGI"/>
</dbReference>
<dbReference type="GO" id="GO:0007613">
    <property type="term" value="P:memory"/>
    <property type="evidence" value="ECO:0000315"/>
    <property type="project" value="MGI"/>
</dbReference>
<dbReference type="GO" id="GO:0042421">
    <property type="term" value="P:norepinephrine biosynthetic process"/>
    <property type="evidence" value="ECO:0000315"/>
    <property type="project" value="UniProtKB"/>
</dbReference>
<dbReference type="GO" id="GO:0120162">
    <property type="term" value="P:positive regulation of cold-induced thermogenesis"/>
    <property type="evidence" value="ECO:0000315"/>
    <property type="project" value="YuBioLab"/>
</dbReference>
<dbReference type="GO" id="GO:0045907">
    <property type="term" value="P:positive regulation of vasoconstriction"/>
    <property type="evidence" value="ECO:0000315"/>
    <property type="project" value="MGI"/>
</dbReference>
<dbReference type="GO" id="GO:2001236">
    <property type="term" value="P:regulation of extrinsic apoptotic signaling pathway"/>
    <property type="evidence" value="ECO:0000315"/>
    <property type="project" value="MGI"/>
</dbReference>
<dbReference type="GO" id="GO:1904705">
    <property type="term" value="P:regulation of vascular associated smooth muscle cell proliferation"/>
    <property type="evidence" value="ECO:0000315"/>
    <property type="project" value="MGI"/>
</dbReference>
<dbReference type="GO" id="GO:1905562">
    <property type="term" value="P:regulation of vascular endothelial cell proliferation"/>
    <property type="evidence" value="ECO:0000315"/>
    <property type="project" value="MGI"/>
</dbReference>
<dbReference type="GO" id="GO:0001975">
    <property type="term" value="P:response to amphetamine"/>
    <property type="evidence" value="ECO:0000315"/>
    <property type="project" value="MGI"/>
</dbReference>
<dbReference type="GO" id="GO:0048265">
    <property type="term" value="P:response to pain"/>
    <property type="evidence" value="ECO:0000315"/>
    <property type="project" value="MGI"/>
</dbReference>
<dbReference type="GO" id="GO:0042310">
    <property type="term" value="P:vasoconstriction"/>
    <property type="evidence" value="ECO:0000315"/>
    <property type="project" value="MGI"/>
</dbReference>
<dbReference type="GO" id="GO:0008542">
    <property type="term" value="P:visual learning"/>
    <property type="evidence" value="ECO:0000315"/>
    <property type="project" value="MGI"/>
</dbReference>
<dbReference type="CDD" id="cd09631">
    <property type="entry name" value="DOMON_DOH"/>
    <property type="match status" value="1"/>
</dbReference>
<dbReference type="FunFam" id="2.60.120.310:FF:000003">
    <property type="entry name" value="Dopamine beta-hydroxylase"/>
    <property type="match status" value="1"/>
</dbReference>
<dbReference type="FunFam" id="2.60.120.230:FF:000001">
    <property type="entry name" value="Monooxygenase, DBH-like 1"/>
    <property type="match status" value="1"/>
</dbReference>
<dbReference type="Gene3D" id="2.60.120.230">
    <property type="match status" value="1"/>
</dbReference>
<dbReference type="Gene3D" id="2.60.120.310">
    <property type="entry name" value="Copper type II, ascorbate-dependent monooxygenase, N-terminal domain"/>
    <property type="match status" value="1"/>
</dbReference>
<dbReference type="InterPro" id="IPR014784">
    <property type="entry name" value="Cu2_ascorb_mOase-like_C"/>
</dbReference>
<dbReference type="InterPro" id="IPR020611">
    <property type="entry name" value="Cu2_ascorb_mOase_CS-1"/>
</dbReference>
<dbReference type="InterPro" id="IPR014783">
    <property type="entry name" value="Cu2_ascorb_mOase_CS-2"/>
</dbReference>
<dbReference type="InterPro" id="IPR000323">
    <property type="entry name" value="Cu2_ascorb_mOase_N"/>
</dbReference>
<dbReference type="InterPro" id="IPR036939">
    <property type="entry name" value="Cu2_ascorb_mOase_N_sf"/>
</dbReference>
<dbReference type="InterPro" id="IPR024548">
    <property type="entry name" value="Cu2_monoox_C"/>
</dbReference>
<dbReference type="InterPro" id="IPR000945">
    <property type="entry name" value="DBH-like"/>
</dbReference>
<dbReference type="InterPro" id="IPR045266">
    <property type="entry name" value="DOH_DOMON"/>
</dbReference>
<dbReference type="InterPro" id="IPR005018">
    <property type="entry name" value="DOMON_domain"/>
</dbReference>
<dbReference type="InterPro" id="IPR008977">
    <property type="entry name" value="PHM/PNGase_F_dom_sf"/>
</dbReference>
<dbReference type="InterPro" id="IPR028460">
    <property type="entry name" value="Tbh/DBH"/>
</dbReference>
<dbReference type="PANTHER" id="PTHR10157">
    <property type="entry name" value="DOPAMINE BETA HYDROXYLASE RELATED"/>
    <property type="match status" value="1"/>
</dbReference>
<dbReference type="PANTHER" id="PTHR10157:SF29">
    <property type="entry name" value="DOPAMINE BETA-HYDROXYLASE"/>
    <property type="match status" value="1"/>
</dbReference>
<dbReference type="Pfam" id="PF03712">
    <property type="entry name" value="Cu2_monoox_C"/>
    <property type="match status" value="1"/>
</dbReference>
<dbReference type="Pfam" id="PF01082">
    <property type="entry name" value="Cu2_monooxygen"/>
    <property type="match status" value="1"/>
</dbReference>
<dbReference type="Pfam" id="PF03351">
    <property type="entry name" value="DOMON"/>
    <property type="match status" value="1"/>
</dbReference>
<dbReference type="PRINTS" id="PR00767">
    <property type="entry name" value="DBMONOXGNASE"/>
</dbReference>
<dbReference type="SMART" id="SM00664">
    <property type="entry name" value="DoH"/>
    <property type="match status" value="1"/>
</dbReference>
<dbReference type="SUPFAM" id="SSF49742">
    <property type="entry name" value="PHM/PNGase F"/>
    <property type="match status" value="2"/>
</dbReference>
<dbReference type="PROSITE" id="PS00084">
    <property type="entry name" value="CU2_MONOOXYGENASE_1"/>
    <property type="match status" value="1"/>
</dbReference>
<dbReference type="PROSITE" id="PS00085">
    <property type="entry name" value="CU2_MONOOXYGENASE_2"/>
    <property type="match status" value="1"/>
</dbReference>
<dbReference type="PROSITE" id="PS50836">
    <property type="entry name" value="DOMON"/>
    <property type="match status" value="1"/>
</dbReference>
<reference key="1">
    <citation type="journal article" date="1992" name="Biochem. Biophys. Res. Commun.">
        <title>Mouse dopamine beta-hydroxylase: primary structure deduced from the cDNA sequence and exon/intron organization of the gene.</title>
        <authorList>
            <person name="Nakano T."/>
            <person name="Kobayashi K."/>
            <person name="Saito S."/>
            <person name="Fujita K."/>
            <person name="Nagatsu T."/>
        </authorList>
    </citation>
    <scope>NUCLEOTIDE SEQUENCE [MRNA]</scope>
    <scope>TISSUE SPECIFICITY</scope>
</reference>
<reference key="2">
    <citation type="journal article" date="2005" name="Science">
        <title>The transcriptional landscape of the mammalian genome.</title>
        <authorList>
            <person name="Carninci P."/>
            <person name="Kasukawa T."/>
            <person name="Katayama S."/>
            <person name="Gough J."/>
            <person name="Frith M.C."/>
            <person name="Maeda N."/>
            <person name="Oyama R."/>
            <person name="Ravasi T."/>
            <person name="Lenhard B."/>
            <person name="Wells C."/>
            <person name="Kodzius R."/>
            <person name="Shimokawa K."/>
            <person name="Bajic V.B."/>
            <person name="Brenner S.E."/>
            <person name="Batalov S."/>
            <person name="Forrest A.R."/>
            <person name="Zavolan M."/>
            <person name="Davis M.J."/>
            <person name="Wilming L.G."/>
            <person name="Aidinis V."/>
            <person name="Allen J.E."/>
            <person name="Ambesi-Impiombato A."/>
            <person name="Apweiler R."/>
            <person name="Aturaliya R.N."/>
            <person name="Bailey T.L."/>
            <person name="Bansal M."/>
            <person name="Baxter L."/>
            <person name="Beisel K.W."/>
            <person name="Bersano T."/>
            <person name="Bono H."/>
            <person name="Chalk A.M."/>
            <person name="Chiu K.P."/>
            <person name="Choudhary V."/>
            <person name="Christoffels A."/>
            <person name="Clutterbuck D.R."/>
            <person name="Crowe M.L."/>
            <person name="Dalla E."/>
            <person name="Dalrymple B.P."/>
            <person name="de Bono B."/>
            <person name="Della Gatta G."/>
            <person name="di Bernardo D."/>
            <person name="Down T."/>
            <person name="Engstrom P."/>
            <person name="Fagiolini M."/>
            <person name="Faulkner G."/>
            <person name="Fletcher C.F."/>
            <person name="Fukushima T."/>
            <person name="Furuno M."/>
            <person name="Futaki S."/>
            <person name="Gariboldi M."/>
            <person name="Georgii-Hemming P."/>
            <person name="Gingeras T.R."/>
            <person name="Gojobori T."/>
            <person name="Green R.E."/>
            <person name="Gustincich S."/>
            <person name="Harbers M."/>
            <person name="Hayashi Y."/>
            <person name="Hensch T.K."/>
            <person name="Hirokawa N."/>
            <person name="Hill D."/>
            <person name="Huminiecki L."/>
            <person name="Iacono M."/>
            <person name="Ikeo K."/>
            <person name="Iwama A."/>
            <person name="Ishikawa T."/>
            <person name="Jakt M."/>
            <person name="Kanapin A."/>
            <person name="Katoh M."/>
            <person name="Kawasawa Y."/>
            <person name="Kelso J."/>
            <person name="Kitamura H."/>
            <person name="Kitano H."/>
            <person name="Kollias G."/>
            <person name="Krishnan S.P."/>
            <person name="Kruger A."/>
            <person name="Kummerfeld S.K."/>
            <person name="Kurochkin I.V."/>
            <person name="Lareau L.F."/>
            <person name="Lazarevic D."/>
            <person name="Lipovich L."/>
            <person name="Liu J."/>
            <person name="Liuni S."/>
            <person name="McWilliam S."/>
            <person name="Madan Babu M."/>
            <person name="Madera M."/>
            <person name="Marchionni L."/>
            <person name="Matsuda H."/>
            <person name="Matsuzawa S."/>
            <person name="Miki H."/>
            <person name="Mignone F."/>
            <person name="Miyake S."/>
            <person name="Morris K."/>
            <person name="Mottagui-Tabar S."/>
            <person name="Mulder N."/>
            <person name="Nakano N."/>
            <person name="Nakauchi H."/>
            <person name="Ng P."/>
            <person name="Nilsson R."/>
            <person name="Nishiguchi S."/>
            <person name="Nishikawa S."/>
            <person name="Nori F."/>
            <person name="Ohara O."/>
            <person name="Okazaki Y."/>
            <person name="Orlando V."/>
            <person name="Pang K.C."/>
            <person name="Pavan W.J."/>
            <person name="Pavesi G."/>
            <person name="Pesole G."/>
            <person name="Petrovsky N."/>
            <person name="Piazza S."/>
            <person name="Reed J."/>
            <person name="Reid J.F."/>
            <person name="Ring B.Z."/>
            <person name="Ringwald M."/>
            <person name="Rost B."/>
            <person name="Ruan Y."/>
            <person name="Salzberg S.L."/>
            <person name="Sandelin A."/>
            <person name="Schneider C."/>
            <person name="Schoenbach C."/>
            <person name="Sekiguchi K."/>
            <person name="Semple C.A."/>
            <person name="Seno S."/>
            <person name="Sessa L."/>
            <person name="Sheng Y."/>
            <person name="Shibata Y."/>
            <person name="Shimada H."/>
            <person name="Shimada K."/>
            <person name="Silva D."/>
            <person name="Sinclair B."/>
            <person name="Sperling S."/>
            <person name="Stupka E."/>
            <person name="Sugiura K."/>
            <person name="Sultana R."/>
            <person name="Takenaka Y."/>
            <person name="Taki K."/>
            <person name="Tammoja K."/>
            <person name="Tan S.L."/>
            <person name="Tang S."/>
            <person name="Taylor M.S."/>
            <person name="Tegner J."/>
            <person name="Teichmann S.A."/>
            <person name="Ueda H.R."/>
            <person name="van Nimwegen E."/>
            <person name="Verardo R."/>
            <person name="Wei C.L."/>
            <person name="Yagi K."/>
            <person name="Yamanishi H."/>
            <person name="Zabarovsky E."/>
            <person name="Zhu S."/>
            <person name="Zimmer A."/>
            <person name="Hide W."/>
            <person name="Bult C."/>
            <person name="Grimmond S.M."/>
            <person name="Teasdale R.D."/>
            <person name="Liu E.T."/>
            <person name="Brusic V."/>
            <person name="Quackenbush J."/>
            <person name="Wahlestedt C."/>
            <person name="Mattick J.S."/>
            <person name="Hume D.A."/>
            <person name="Kai C."/>
            <person name="Sasaki D."/>
            <person name="Tomaru Y."/>
            <person name="Fukuda S."/>
            <person name="Kanamori-Katayama M."/>
            <person name="Suzuki M."/>
            <person name="Aoki J."/>
            <person name="Arakawa T."/>
            <person name="Iida J."/>
            <person name="Imamura K."/>
            <person name="Itoh M."/>
            <person name="Kato T."/>
            <person name="Kawaji H."/>
            <person name="Kawagashira N."/>
            <person name="Kawashima T."/>
            <person name="Kojima M."/>
            <person name="Kondo S."/>
            <person name="Konno H."/>
            <person name="Nakano K."/>
            <person name="Ninomiya N."/>
            <person name="Nishio T."/>
            <person name="Okada M."/>
            <person name="Plessy C."/>
            <person name="Shibata K."/>
            <person name="Shiraki T."/>
            <person name="Suzuki S."/>
            <person name="Tagami M."/>
            <person name="Waki K."/>
            <person name="Watahiki A."/>
            <person name="Okamura-Oho Y."/>
            <person name="Suzuki H."/>
            <person name="Kawai J."/>
            <person name="Hayashizaki Y."/>
        </authorList>
    </citation>
    <scope>NUCLEOTIDE SEQUENCE [LARGE SCALE MRNA]</scope>
    <source>
        <strain>C57BL/6J</strain>
        <tissue>Embryo</tissue>
    </source>
</reference>
<reference key="3">
    <citation type="journal article" date="2009" name="PLoS Biol.">
        <title>Lineage-specific biology revealed by a finished genome assembly of the mouse.</title>
        <authorList>
            <person name="Church D.M."/>
            <person name="Goodstadt L."/>
            <person name="Hillier L.W."/>
            <person name="Zody M.C."/>
            <person name="Goldstein S."/>
            <person name="She X."/>
            <person name="Bult C.J."/>
            <person name="Agarwala R."/>
            <person name="Cherry J.L."/>
            <person name="DiCuccio M."/>
            <person name="Hlavina W."/>
            <person name="Kapustin Y."/>
            <person name="Meric P."/>
            <person name="Maglott D."/>
            <person name="Birtle Z."/>
            <person name="Marques A.C."/>
            <person name="Graves T."/>
            <person name="Zhou S."/>
            <person name="Teague B."/>
            <person name="Potamousis K."/>
            <person name="Churas C."/>
            <person name="Place M."/>
            <person name="Herschleb J."/>
            <person name="Runnheim R."/>
            <person name="Forrest D."/>
            <person name="Amos-Landgraf J."/>
            <person name="Schwartz D.C."/>
            <person name="Cheng Z."/>
            <person name="Lindblad-Toh K."/>
            <person name="Eichler E.E."/>
            <person name="Ponting C.P."/>
        </authorList>
    </citation>
    <scope>NUCLEOTIDE SEQUENCE [LARGE SCALE GENOMIC DNA]</scope>
    <source>
        <strain>C57BL/6J</strain>
    </source>
</reference>
<reference key="4">
    <citation type="submission" date="2005-07" db="EMBL/GenBank/DDBJ databases">
        <authorList>
            <person name="Mural R.J."/>
            <person name="Adams M.D."/>
            <person name="Myers E.W."/>
            <person name="Smith H.O."/>
            <person name="Venter J.C."/>
        </authorList>
    </citation>
    <scope>NUCLEOTIDE SEQUENCE [LARGE SCALE GENOMIC DNA]</scope>
</reference>
<reference key="5">
    <citation type="journal article" date="2004" name="Genome Res.">
        <title>The status, quality, and expansion of the NIH full-length cDNA project: the Mammalian Gene Collection (MGC).</title>
        <authorList>
            <consortium name="The MGC Project Team"/>
        </authorList>
    </citation>
    <scope>NUCLEOTIDE SEQUENCE [LARGE SCALE MRNA]</scope>
    <source>
        <tissue>Brain</tissue>
    </source>
</reference>
<reference key="6">
    <citation type="journal article" date="1994" name="J. Biol. Chem.">
        <title>Functional and high level expression of human dopamine beta-hydroxylase in transgenic mice.</title>
        <authorList>
            <person name="Kobayashi K."/>
            <person name="Morita S."/>
            <person name="Mizuguchi T."/>
            <person name="Sawada H."/>
            <person name="Yamada K."/>
            <person name="Nagatsu I."/>
            <person name="Fujita K."/>
            <person name="Nagatsu T."/>
        </authorList>
    </citation>
    <scope>SUBCELLULAR LOCATION</scope>
    <scope>TISSUE SPECIFICITY</scope>
</reference>
<reference key="7">
    <citation type="journal article" date="1995" name="Nature">
        <title>Noradrenaline is essential for mouse fetal development.</title>
        <authorList>
            <person name="Thomas S.A."/>
            <person name="Matsumoto A.M."/>
            <person name="Palmiter R.D."/>
        </authorList>
    </citation>
    <scope>DISRUPTION PHENOTYPE</scope>
    <scope>FUNCTION</scope>
    <scope>PATHWAY</scope>
    <scope>CATALYTIC ACTIVITY</scope>
</reference>
<reference key="8">
    <citation type="journal article" date="2016" name="PLoS ONE">
        <title>Human bacterial artificial chromosome (BAC) transgenesis fully rescues noradrenergic function in dopamine beta-hydroxylase knockout mice.</title>
        <authorList>
            <person name="Cubells J.F."/>
            <person name="Schroeder J.P."/>
            <person name="Barrie E.S."/>
            <person name="Manvich D.F."/>
            <person name="Sadee W."/>
            <person name="Berg T."/>
            <person name="Mercer K."/>
            <person name="Stowe T.A."/>
            <person name="Liles L.C."/>
            <person name="Squires K.E."/>
            <person name="Mezher A."/>
            <person name="Curtin P."/>
            <person name="Perdomo D.L."/>
            <person name="Szot P."/>
            <person name="Weinshenker D."/>
        </authorList>
    </citation>
    <scope>DISRUPTION PHENOTYPE</scope>
    <scope>FUNCTION</scope>
    <scope>PATHWAY</scope>
</reference>
<keyword id="KW-0002">3D-structure</keyword>
<keyword id="KW-0127">Catecholamine biosynthesis</keyword>
<keyword id="KW-0186">Copper</keyword>
<keyword id="KW-0968">Cytoplasmic vesicle</keyword>
<keyword id="KW-1015">Disulfide bond</keyword>
<keyword id="KW-0325">Glycoprotein</keyword>
<keyword id="KW-0472">Membrane</keyword>
<keyword id="KW-0479">Metal-binding</keyword>
<keyword id="KW-0503">Monooxygenase</keyword>
<keyword id="KW-0560">Oxidoreductase</keyword>
<keyword id="KW-0597">Phosphoprotein</keyword>
<keyword id="KW-1185">Reference proteome</keyword>
<keyword id="KW-0735">Signal-anchor</keyword>
<keyword id="KW-0812">Transmembrane</keyword>
<keyword id="KW-1133">Transmembrane helix</keyword>
<keyword id="KW-0847">Vitamin C</keyword>
<organism>
    <name type="scientific">Mus musculus</name>
    <name type="common">Mouse</name>
    <dbReference type="NCBI Taxonomy" id="10090"/>
    <lineage>
        <taxon>Eukaryota</taxon>
        <taxon>Metazoa</taxon>
        <taxon>Chordata</taxon>
        <taxon>Craniata</taxon>
        <taxon>Vertebrata</taxon>
        <taxon>Euteleostomi</taxon>
        <taxon>Mammalia</taxon>
        <taxon>Eutheria</taxon>
        <taxon>Euarchontoglires</taxon>
        <taxon>Glires</taxon>
        <taxon>Rodentia</taxon>
        <taxon>Myomorpha</taxon>
        <taxon>Muroidea</taxon>
        <taxon>Muridae</taxon>
        <taxon>Murinae</taxon>
        <taxon>Mus</taxon>
        <taxon>Mus</taxon>
    </lineage>
</organism>